<proteinExistence type="evidence at protein level"/>
<organism>
    <name type="scientific">Rattus norvegicus</name>
    <name type="common">Rat</name>
    <dbReference type="NCBI Taxonomy" id="10116"/>
    <lineage>
        <taxon>Eukaryota</taxon>
        <taxon>Metazoa</taxon>
        <taxon>Chordata</taxon>
        <taxon>Craniata</taxon>
        <taxon>Vertebrata</taxon>
        <taxon>Euteleostomi</taxon>
        <taxon>Mammalia</taxon>
        <taxon>Eutheria</taxon>
        <taxon>Euarchontoglires</taxon>
        <taxon>Glires</taxon>
        <taxon>Rodentia</taxon>
        <taxon>Myomorpha</taxon>
        <taxon>Muroidea</taxon>
        <taxon>Muridae</taxon>
        <taxon>Murinae</taxon>
        <taxon>Rattus</taxon>
    </lineage>
</organism>
<reference key="1">
    <citation type="journal article" date="1990" name="Biochem. Biophys. Res. Commun.">
        <title>cDNA cloning and sequencing for the import precursor of coupling factor 6 in H(+)-ATP synthase from rat liver mitochondria.</title>
        <authorList>
            <person name="Higuti T."/>
            <person name="Osaka F."/>
            <person name="Yoshihara Y."/>
            <person name="Tsurumi C."/>
            <person name="Kawamura Y."/>
            <person name="Tani I."/>
            <person name="Toda H."/>
            <person name="Kakuno T."/>
            <person name="Sakiyama F."/>
            <person name="Tanaka K."/>
            <person name="Ichihara A."/>
        </authorList>
    </citation>
    <scope>NUCLEOTIDE SEQUENCE [MRNA]</scope>
    <source>
        <tissue>Liver</tissue>
    </source>
</reference>
<reference key="2">
    <citation type="journal article" date="1992" name="Gene">
        <title>Rat mitochondrial coupling factor 6: molecular cloning of a cDNA encoding the imported precursor.</title>
        <authorList>
            <person name="Tracer H.L."/>
            <person name="Loh Y.P."/>
            <person name="Birch N.P."/>
        </authorList>
    </citation>
    <scope>NUCLEOTIDE SEQUENCE [MRNA]</scope>
    <source>
        <tissue>Pituitary anterior lobe</tissue>
    </source>
</reference>
<reference key="3">
    <citation type="journal article" date="2004" name="Genome Res.">
        <title>The status, quality, and expansion of the NIH full-length cDNA project: the Mammalian Gene Collection (MGC).</title>
        <authorList>
            <consortium name="The MGC Project Team"/>
        </authorList>
    </citation>
    <scope>NUCLEOTIDE SEQUENCE [LARGE SCALE MRNA]</scope>
    <source>
        <tissue>Pituitary</tissue>
    </source>
</reference>
<reference key="4">
    <citation type="journal article" date="1992" name="J. Biol. Chem.">
        <title>A simple, rapid method for purification of epsilon-subunit, coupling factor 6, subunit d, and subunit e from rat liver H(+)-ATP synthase and determination of the complete amino acid sequence of epsilon-subunit.</title>
        <authorList>
            <person name="Higuti T."/>
            <person name="Yoshihara Y."/>
            <person name="Kuroiwa K."/>
            <person name="Kawamura Y."/>
            <person name="Toda H."/>
            <person name="Sakiyama F."/>
        </authorList>
    </citation>
    <scope>PROTEIN SEQUENCE OF 33-66</scope>
    <source>
        <tissue>Liver</tissue>
    </source>
</reference>
<reference key="5">
    <citation type="journal article" date="2007" name="Mol. Cell. Proteomics">
        <title>Identification of two proteins associated with mammalian ATP synthase.</title>
        <authorList>
            <person name="Meyer B."/>
            <person name="Wittig I."/>
            <person name="Trifilieff E."/>
            <person name="Karas M."/>
            <person name="Schaegger H."/>
        </authorList>
    </citation>
    <scope>IDENTIFICATION BY MASS SPECTROMETRY</scope>
    <scope>IDENTIFICATION IN THE ATP SYNTHASE COMPLEX</scope>
</reference>
<reference key="6">
    <citation type="journal article" date="2012" name="Nat. Commun.">
        <title>Quantitative maps of protein phosphorylation sites across 14 different rat organs and tissues.</title>
        <authorList>
            <person name="Lundby A."/>
            <person name="Secher A."/>
            <person name="Lage K."/>
            <person name="Nordsborg N.B."/>
            <person name="Dmytriyev A."/>
            <person name="Lundby C."/>
            <person name="Olsen J.V."/>
        </authorList>
    </citation>
    <scope>PHOSPHORYLATION [LARGE SCALE ANALYSIS] AT SER-108</scope>
    <scope>IDENTIFICATION BY MASS SPECTROMETRY [LARGE SCALE ANALYSIS]</scope>
</reference>
<name>ATP5J_RAT</name>
<keyword id="KW-0007">Acetylation</keyword>
<keyword id="KW-0138">CF(0)</keyword>
<keyword id="KW-0903">Direct protein sequencing</keyword>
<keyword id="KW-0375">Hydrogen ion transport</keyword>
<keyword id="KW-0406">Ion transport</keyword>
<keyword id="KW-0472">Membrane</keyword>
<keyword id="KW-0496">Mitochondrion</keyword>
<keyword id="KW-0999">Mitochondrion inner membrane</keyword>
<keyword id="KW-0597">Phosphoprotein</keyword>
<keyword id="KW-1185">Reference proteome</keyword>
<keyword id="KW-0809">Transit peptide</keyword>
<keyword id="KW-0813">Transport</keyword>
<comment type="function">
    <text evidence="1 2 3">Subunit F6, of the mitochondrial membrane ATP synthase complex (F(1)F(0) ATP synthase or Complex V) that produces ATP from ADP in the presence of a proton gradient across the membrane which is generated by electron transport complexes of the respiratory chain. ATP synthase complex consist of a soluble F(1) head domain - the catalytic core - and a membrane F(1) domain - the membrane proton channel. These two domains are linked by a central stalk rotating inside the F(1) region and a stationary peripheral stalk. During catalysis, ATP synthesis in the catalytic domain of F(1) is coupled via a rotary mechanism of the central stalk subunits to proton translocation (By similarity). In vivo, can only synthesize ATP although its ATP hydrolase activity can be activated artificially in vitro (By similarity). Part of the complex F(0) domain (By similarity). Part of the complex F(0) domain and the peripheric stalk, which acts as a stator to hold the catalytic alpha(3)beta(3) subcomplex and subunit a/ATP6 static relative to the rotary elements (By similarity).</text>
</comment>
<comment type="subunit">
    <text evidence="2 6">Component of the ATP synthase complex composed at least of ATP5F1A/subunit alpha, ATP5F1B/subunit beta, ATP5MC1/subunit c (homooctomer), MT-ATP6/subunit a, MT-ATP8/subunit 8, ATP5ME/subunit e, ATP5MF/subunit f, ATP5MG/subunit g, ATP5MK/subunit k, ATP5MJ/subunit j, ATP5F1C/subunit gamma, ATP5F1D/subunit delta, ATP5F1E/subunit epsilon, ATP5PF/subunit F6, ATP5PB/subunit b, ATP5PD/subunit d, ATP5PO/subunit OSCP (PubMed:17575325). ATP synthase complex consists of a soluble F(1) head domain (subunits alpha(3) and beta(3)) - the catalytic core - and a membrane F(0) domain - the membrane proton channel (subunits c, a, 8, e, f, g, k and j). These two domains are linked by a central stalk (subunits gamma, delta, and epsilon) rotating inside the F1 region and a stationary peripheral stalk (subunits F6, b, d, and OSCP) (By similarity).</text>
</comment>
<comment type="subcellular location">
    <subcellularLocation>
        <location>Mitochondrion</location>
    </subcellularLocation>
    <subcellularLocation>
        <location>Mitochondrion inner membrane</location>
    </subcellularLocation>
</comment>
<comment type="similarity">
    <text evidence="7">Belongs to the eukaryotic ATPase subunit F6 family.</text>
</comment>
<sequence>MTVQRIFRLSSVLRSAVSVHLRRNIGVTAVAFNKELDPVQKLFLDKIREYKAKRLASGGPVDTGPEYQQEVDRELFKLKQMYGKGEMDKFPTFNFEDPKFEVLDKPQS</sequence>
<gene>
    <name evidence="8" type="primary">Atp5pf</name>
    <name type="synonym">Atp5j</name>
</gene>
<feature type="transit peptide" description="Mitochondrion" evidence="5">
    <location>
        <begin position="1"/>
        <end position="32"/>
    </location>
</feature>
<feature type="chain" id="PRO_0000002531" description="ATP synthase peripheral stalk subunit F6, mitochondrial">
    <location>
        <begin position="33"/>
        <end position="108"/>
    </location>
</feature>
<feature type="modified residue" description="N6-acetyllysine" evidence="2">
    <location>
        <position position="41"/>
    </location>
</feature>
<feature type="modified residue" description="N6-acetyllysine" evidence="2">
    <location>
        <position position="46"/>
    </location>
</feature>
<feature type="modified residue" description="N6-acetyllysine" evidence="4">
    <location>
        <position position="79"/>
    </location>
</feature>
<feature type="modified residue" description="N6-acetyllysine; alternate" evidence="4">
    <location>
        <position position="84"/>
    </location>
</feature>
<feature type="modified residue" description="N6-succinyllysine; alternate" evidence="4">
    <location>
        <position position="84"/>
    </location>
</feature>
<feature type="modified residue" description="N6-acetyllysine; alternate" evidence="2">
    <location>
        <position position="99"/>
    </location>
</feature>
<feature type="modified residue" description="N6-succinyllysine; alternate" evidence="4">
    <location>
        <position position="99"/>
    </location>
</feature>
<feature type="modified residue" description="N6-acetyllysine" evidence="2">
    <location>
        <position position="105"/>
    </location>
</feature>
<feature type="modified residue" description="Phosphoserine" evidence="9">
    <location>
        <position position="108"/>
    </location>
</feature>
<evidence type="ECO:0000250" key="1">
    <source>
        <dbReference type="UniProtKB" id="P02721"/>
    </source>
</evidence>
<evidence type="ECO:0000250" key="2">
    <source>
        <dbReference type="UniProtKB" id="P18859"/>
    </source>
</evidence>
<evidence type="ECO:0000250" key="3">
    <source>
        <dbReference type="UniProtKB" id="P19483"/>
    </source>
</evidence>
<evidence type="ECO:0000250" key="4">
    <source>
        <dbReference type="UniProtKB" id="P97450"/>
    </source>
</evidence>
<evidence type="ECO:0000269" key="5">
    <source>
    </source>
</evidence>
<evidence type="ECO:0000269" key="6">
    <source>
    </source>
</evidence>
<evidence type="ECO:0000305" key="7"/>
<evidence type="ECO:0000312" key="8">
    <source>
        <dbReference type="RGD" id="621376"/>
    </source>
</evidence>
<evidence type="ECO:0007744" key="9">
    <source>
    </source>
</evidence>
<protein>
    <recommendedName>
        <fullName evidence="7">ATP synthase peripheral stalk subunit F6, mitochondrial</fullName>
        <shortName>ATPase subunit F6</shortName>
    </recommendedName>
    <alternativeName>
        <fullName evidence="7">ATP synthase peripheral stalk subunit F6</fullName>
    </alternativeName>
</protein>
<accession>P21571</accession>
<dbReference type="EMBL" id="M73030">
    <property type="protein sequence ID" value="AAA40954.1"/>
    <property type="molecule type" value="mRNA"/>
</dbReference>
<dbReference type="EMBL" id="X54510">
    <property type="protein sequence ID" value="CAA38369.1"/>
    <property type="molecule type" value="mRNA"/>
</dbReference>
<dbReference type="EMBL" id="BC059121">
    <property type="protein sequence ID" value="AAH59121.1"/>
    <property type="molecule type" value="mRNA"/>
</dbReference>
<dbReference type="PIR" id="JC1167">
    <property type="entry name" value="JC1167"/>
</dbReference>
<dbReference type="RefSeq" id="NP_001415925.1">
    <property type="nucleotide sequence ID" value="NM_001428996.1"/>
</dbReference>
<dbReference type="RefSeq" id="NP_001415926.1">
    <property type="nucleotide sequence ID" value="NM_001428997.1"/>
</dbReference>
<dbReference type="RefSeq" id="NP_446054.1">
    <property type="nucleotide sequence ID" value="NM_053602.2"/>
</dbReference>
<dbReference type="RefSeq" id="XP_008766824.1">
    <property type="nucleotide sequence ID" value="XM_008768602.2"/>
</dbReference>
<dbReference type="RefSeq" id="XP_008766825.1">
    <property type="nucleotide sequence ID" value="XM_008768603.1"/>
</dbReference>
<dbReference type="RefSeq" id="XP_017453574.1">
    <property type="nucleotide sequence ID" value="XM_017598085.1"/>
</dbReference>
<dbReference type="RefSeq" id="XP_017453575.1">
    <property type="nucleotide sequence ID" value="XM_017598086.1"/>
</dbReference>
<dbReference type="SMR" id="P21571"/>
<dbReference type="BioGRID" id="250190">
    <property type="interactions" value="3"/>
</dbReference>
<dbReference type="CORUM" id="P21571"/>
<dbReference type="FunCoup" id="P21571">
    <property type="interactions" value="1871"/>
</dbReference>
<dbReference type="IntAct" id="P21571">
    <property type="interactions" value="1"/>
</dbReference>
<dbReference type="MINT" id="P21571"/>
<dbReference type="STRING" id="10116.ENSRNOP00000002116"/>
<dbReference type="GlyGen" id="P21571">
    <property type="glycosylation" value="1 site, 1 O-linked glycan (1 site)"/>
</dbReference>
<dbReference type="iPTMnet" id="P21571"/>
<dbReference type="PhosphoSitePlus" id="P21571"/>
<dbReference type="jPOST" id="P21571"/>
<dbReference type="PaxDb" id="10116-ENSRNOP00000002116"/>
<dbReference type="GeneID" id="94271"/>
<dbReference type="KEGG" id="rno:94271"/>
<dbReference type="UCSC" id="RGD:621376">
    <property type="organism name" value="rat"/>
</dbReference>
<dbReference type="AGR" id="RGD:621376"/>
<dbReference type="CTD" id="522"/>
<dbReference type="RGD" id="621376">
    <property type="gene designation" value="Atp5pf"/>
</dbReference>
<dbReference type="VEuPathDB" id="HostDB:ENSRNOG00000001551"/>
<dbReference type="eggNOG" id="KOG4634">
    <property type="taxonomic scope" value="Eukaryota"/>
</dbReference>
<dbReference type="HOGENOM" id="CLU_145649_1_0_1"/>
<dbReference type="InParanoid" id="P21571"/>
<dbReference type="OrthoDB" id="14362at9989"/>
<dbReference type="PhylomeDB" id="P21571"/>
<dbReference type="TreeFam" id="TF318998"/>
<dbReference type="Reactome" id="R-RNO-163210">
    <property type="pathway name" value="Formation of ATP by chemiosmotic coupling"/>
</dbReference>
<dbReference type="Reactome" id="R-RNO-8949613">
    <property type="pathway name" value="Cristae formation"/>
</dbReference>
<dbReference type="Reactome" id="R-RNO-9837999">
    <property type="pathway name" value="Mitochondrial protein degradation"/>
</dbReference>
<dbReference type="PRO" id="PR:P21571"/>
<dbReference type="Proteomes" id="UP000002494">
    <property type="component" value="Chromosome 11"/>
</dbReference>
<dbReference type="Bgee" id="ENSRNOG00000001551">
    <property type="expression patterns" value="Expressed in heart and 20 other cell types or tissues"/>
</dbReference>
<dbReference type="GO" id="GO:0009986">
    <property type="term" value="C:cell surface"/>
    <property type="evidence" value="ECO:0000314"/>
    <property type="project" value="RGD"/>
</dbReference>
<dbReference type="GO" id="GO:0005615">
    <property type="term" value="C:extracellular space"/>
    <property type="evidence" value="ECO:0000314"/>
    <property type="project" value="RGD"/>
</dbReference>
<dbReference type="GO" id="GO:0005743">
    <property type="term" value="C:mitochondrial inner membrane"/>
    <property type="evidence" value="ECO:0007669"/>
    <property type="project" value="UniProtKB-SubCell"/>
</dbReference>
<dbReference type="GO" id="GO:0045259">
    <property type="term" value="C:proton-transporting ATP synthase complex"/>
    <property type="evidence" value="ECO:0000314"/>
    <property type="project" value="UniProtKB"/>
</dbReference>
<dbReference type="GO" id="GO:0044877">
    <property type="term" value="F:protein-containing complex binding"/>
    <property type="evidence" value="ECO:0000314"/>
    <property type="project" value="RGD"/>
</dbReference>
<dbReference type="GO" id="GO:0015078">
    <property type="term" value="F:proton transmembrane transporter activity"/>
    <property type="evidence" value="ECO:0007669"/>
    <property type="project" value="InterPro"/>
</dbReference>
<dbReference type="GO" id="GO:1900139">
    <property type="term" value="P:negative regulation of arachidonate secretion"/>
    <property type="evidence" value="ECO:0000314"/>
    <property type="project" value="RGD"/>
</dbReference>
<dbReference type="GO" id="GO:0032307">
    <property type="term" value="P:negative regulation of prostaglandin secretion"/>
    <property type="evidence" value="ECO:0000314"/>
    <property type="project" value="RGD"/>
</dbReference>
<dbReference type="GO" id="GO:0045777">
    <property type="term" value="P:positive regulation of blood pressure"/>
    <property type="evidence" value="ECO:0000314"/>
    <property type="project" value="RGD"/>
</dbReference>
<dbReference type="GO" id="GO:0010460">
    <property type="term" value="P:positive regulation of heart rate"/>
    <property type="evidence" value="ECO:0000314"/>
    <property type="project" value="RGD"/>
</dbReference>
<dbReference type="GO" id="GO:0042776">
    <property type="term" value="P:proton motive force-driven mitochondrial ATP synthesis"/>
    <property type="evidence" value="ECO:0000266"/>
    <property type="project" value="RGD"/>
</dbReference>
<dbReference type="GO" id="GO:0014850">
    <property type="term" value="P:response to muscle activity"/>
    <property type="evidence" value="ECO:0000270"/>
    <property type="project" value="RGD"/>
</dbReference>
<dbReference type="FunFam" id="1.10.246.110:FF:000001">
    <property type="entry name" value="ATP synthase-coupling factor 6, mitochondrial"/>
    <property type="match status" value="1"/>
</dbReference>
<dbReference type="Gene3D" id="1.10.246.110">
    <property type="entry name" value="Mitochondrial ATP synthase-coupling factor 6"/>
    <property type="match status" value="1"/>
</dbReference>
<dbReference type="InterPro" id="IPR008387">
    <property type="entry name" value="ATP_synth_f6_mt"/>
</dbReference>
<dbReference type="InterPro" id="IPR036204">
    <property type="entry name" value="ATP_synth_f6_sf_mt"/>
</dbReference>
<dbReference type="PANTHER" id="PTHR12441">
    <property type="entry name" value="ATP SYNTHASE COUPLING FACTOR 6, MITOCHONDRIAL"/>
    <property type="match status" value="1"/>
</dbReference>
<dbReference type="PANTHER" id="PTHR12441:SF10">
    <property type="entry name" value="ATP SYNTHASE-COUPLING FACTOR 6, MITOCHONDRIAL"/>
    <property type="match status" value="1"/>
</dbReference>
<dbReference type="Pfam" id="PF05511">
    <property type="entry name" value="ATP-synt_F6"/>
    <property type="match status" value="1"/>
</dbReference>
<dbReference type="PIRSF" id="PIRSF002455">
    <property type="entry name" value="ATP_synthase_coupling_factor_6"/>
    <property type="match status" value="1"/>
</dbReference>
<dbReference type="SUPFAM" id="SSF111357">
    <property type="entry name" value="Mitochondrial ATP synthase coupling factor 6"/>
    <property type="match status" value="1"/>
</dbReference>